<comment type="function">
    <text>In the hair cortex, hair keratin intermediate filaments are embedded in an interfilamentous matrix, consisting of hair keratin-associated proteins (KRTAP), which are essential for the formation of a rigid and resistant hair shaft through their extensive disulfide bond cross-linking with abundant cysteine residues of hair keratins. The matrix proteins include the high-sulfur and high-glycine-tyrosine keratins.</text>
</comment>
<comment type="subunit">
    <text>Interacts with hair keratins.</text>
</comment>
<comment type="interaction">
    <interactant intactId="EBI-1044640">
        <id>Q9BYQ4</id>
    </interactant>
    <interactant intactId="EBI-12006944">
        <id>O43184-4</id>
        <label>ADAM12</label>
    </interactant>
    <organismsDiffer>false</organismsDiffer>
    <experiments>5</experiments>
</comment>
<comment type="interaction">
    <interactant intactId="EBI-1044640">
        <id>Q9BYQ4</id>
    </interactant>
    <interactant intactId="EBI-10173507">
        <id>Q6UY14-3</id>
        <label>ADAMTSL4</label>
    </interactant>
    <organismsDiffer>false</organismsDiffer>
    <experiments>6</experiments>
</comment>
<comment type="interaction">
    <interactant intactId="EBI-1044640">
        <id>Q9BYQ4</id>
    </interactant>
    <interactant intactId="EBI-727098">
        <id>P21549</id>
        <label>AGXT</label>
    </interactant>
    <organismsDiffer>false</organismsDiffer>
    <experiments>3</experiments>
</comment>
<comment type="interaction">
    <interactant intactId="EBI-1044640">
        <id>Q9BYQ4</id>
    </interactant>
    <interactant intactId="EBI-25928834">
        <id>A0A0S2Z5Q7</id>
        <label>ALS2</label>
    </interactant>
    <organismsDiffer>false</organismsDiffer>
    <experiments>3</experiments>
</comment>
<comment type="interaction">
    <interactant intactId="EBI-1044640">
        <id>Q9BYQ4</id>
    </interactant>
    <interactant intactId="EBI-17264467">
        <id>P05067-2</id>
        <label>APP</label>
    </interactant>
    <organismsDiffer>false</organismsDiffer>
    <experiments>3</experiments>
</comment>
<comment type="interaction">
    <interactant intactId="EBI-1044640">
        <id>Q9BYQ4</id>
    </interactant>
    <interactant intactId="EBI-745213">
        <id>P29972</id>
        <label>AQP1</label>
    </interactant>
    <organismsDiffer>false</organismsDiffer>
    <experiments>3</experiments>
</comment>
<comment type="interaction">
    <interactant intactId="EBI-1044640">
        <id>Q9BYQ4</id>
    </interactant>
    <interactant intactId="EBI-716933">
        <id>Q8N6T3</id>
        <label>ARFGAP1</label>
    </interactant>
    <organismsDiffer>false</organismsDiffer>
    <experiments>3</experiments>
</comment>
<comment type="interaction">
    <interactant intactId="EBI-1044640">
        <id>Q9BYQ4</id>
    </interactant>
    <interactant intactId="EBI-12006308">
        <id>Q7Z3C6-3</id>
        <label>ATG9A</label>
    </interactant>
    <organismsDiffer>false</organismsDiffer>
    <experiments>3</experiments>
</comment>
<comment type="interaction">
    <interactant intactId="EBI-1044640">
        <id>Q9BYQ4</id>
    </interactant>
    <interactant intactId="EBI-930964">
        <id>P54253</id>
        <label>ATXN1</label>
    </interactant>
    <organismsDiffer>false</organismsDiffer>
    <experiments>3</experiments>
</comment>
<comment type="interaction">
    <interactant intactId="EBI-1044640">
        <id>Q9BYQ4</id>
    </interactant>
    <interactant intactId="EBI-4400025">
        <id>Q9Y2T1</id>
        <label>AXIN2</label>
    </interactant>
    <organismsDiffer>false</organismsDiffer>
    <experiments>3</experiments>
</comment>
<comment type="interaction">
    <interactant intactId="EBI-1044640">
        <id>Q9BYQ4</id>
    </interactant>
    <interactant intactId="EBI-7317823">
        <id>Q6P5X5</id>
        <label>C22orf39</label>
    </interactant>
    <organismsDiffer>false</organismsDiffer>
    <experiments>3</experiments>
</comment>
<comment type="interaction">
    <interactant intactId="EBI-1044640">
        <id>Q9BYQ4</id>
    </interactant>
    <interactant intactId="EBI-3866279">
        <id>Q9BWT7</id>
        <label>CARD10</label>
    </interactant>
    <organismsDiffer>false</organismsDiffer>
    <experiments>3</experiments>
</comment>
<comment type="interaction">
    <interactant intactId="EBI-1044640">
        <id>Q9BYQ4</id>
    </interactant>
    <interactant intactId="EBI-744545">
        <id>Q8NEC5</id>
        <label>CATSPER1</label>
    </interactant>
    <organismsDiffer>false</organismsDiffer>
    <experiments>8</experiments>
</comment>
<comment type="interaction">
    <interactant intactId="EBI-1044640">
        <id>Q9BYQ4</id>
    </interactant>
    <interactant intactId="EBI-355471">
        <id>Q8IWP9</id>
        <label>CCDC28A</label>
    </interactant>
    <organismsDiffer>false</organismsDiffer>
    <experiments>3</experiments>
</comment>
<comment type="interaction">
    <interactant intactId="EBI-1044640">
        <id>Q9BYQ4</id>
    </interactant>
    <interactant intactId="EBI-10274247">
        <id>Q8TCT0</id>
        <label>CERK</label>
    </interactant>
    <organismsDiffer>false</organismsDiffer>
    <experiments>3</experiments>
</comment>
<comment type="interaction">
    <interactant intactId="EBI-1044640">
        <id>Q9BYQ4</id>
    </interactant>
    <interactant intactId="EBI-947551">
        <id>Q9H2X0</id>
        <label>CHRD</label>
    </interactant>
    <organismsDiffer>false</organismsDiffer>
    <experiments>3</experiments>
</comment>
<comment type="interaction">
    <interactant intactId="EBI-1044640">
        <id>Q9BYQ4</id>
    </interactant>
    <interactant intactId="EBI-741032">
        <id>Q8NE01</id>
        <label>CNNM3</label>
    </interactant>
    <organismsDiffer>false</organismsDiffer>
    <experiments>3</experiments>
</comment>
<comment type="interaction">
    <interactant intactId="EBI-1044640">
        <id>Q9BYQ4</id>
    </interactant>
    <interactant intactId="EBI-747133">
        <id>P27658</id>
        <label>COL8A1</label>
    </interactant>
    <organismsDiffer>false</organismsDiffer>
    <experiments>3</experiments>
</comment>
<comment type="interaction">
    <interactant intactId="EBI-1044640">
        <id>Q9BYQ4</id>
    </interactant>
    <interactant intactId="EBI-713677">
        <id>Q9UGL9</id>
        <label>CRCT1</label>
    </interactant>
    <organismsDiffer>false</organismsDiffer>
    <experiments>3</experiments>
</comment>
<comment type="interaction">
    <interactant intactId="EBI-1044640">
        <id>Q9BYQ4</id>
    </interactant>
    <interactant intactId="EBI-10192698">
        <id>Q02930-3</id>
        <label>CREB5</label>
    </interactant>
    <organismsDiffer>false</organismsDiffer>
    <experiments>13</experiments>
</comment>
<comment type="interaction">
    <interactant intactId="EBI-1044640">
        <id>Q9BYQ4</id>
    </interactant>
    <interactant intactId="EBI-10295404">
        <id>Q99895</id>
        <label>CTRC</label>
    </interactant>
    <organismsDiffer>false</organismsDiffer>
    <experiments>3</experiments>
</comment>
<comment type="interaction">
    <interactant intactId="EBI-1044640">
        <id>Q9BYQ4</id>
    </interactant>
    <interactant intactId="EBI-14156412">
        <id>Q08AG9</id>
        <label>CYP21A2</label>
    </interactant>
    <organismsDiffer>false</organismsDiffer>
    <experiments>3</experiments>
</comment>
<comment type="interaction">
    <interactant intactId="EBI-1044640">
        <id>Q9BYQ4</id>
    </interactant>
    <interactant intactId="EBI-3867333">
        <id>A8MQ03</id>
        <label>CYSRT1</label>
    </interactant>
    <organismsDiffer>false</organismsDiffer>
    <experiments>3</experiments>
</comment>
<comment type="interaction">
    <interactant intactId="EBI-1044640">
        <id>Q9BYQ4</id>
    </interactant>
    <interactant intactId="EBI-9679045">
        <id>Q9NQL9</id>
        <label>DMRT3</label>
    </interactant>
    <organismsDiffer>false</organismsDiffer>
    <experiments>3</experiments>
</comment>
<comment type="interaction">
    <interactant intactId="EBI-1044640">
        <id>Q9BYQ4</id>
    </interactant>
    <interactant intactId="EBI-448771">
        <id>Q92608</id>
        <label>DOCK2</label>
    </interactant>
    <organismsDiffer>false</organismsDiffer>
    <experiments>3</experiments>
</comment>
<comment type="interaction">
    <interactant intactId="EBI-1044640">
        <id>Q9BYQ4</id>
    </interactant>
    <interactant intactId="EBI-751192">
        <id>Q5HYJ3</id>
        <label>FAM76B</label>
    </interactant>
    <organismsDiffer>false</organismsDiffer>
    <experiments>3</experiments>
</comment>
<comment type="interaction">
    <interactant intactId="EBI-1044640">
        <id>Q9BYQ4</id>
    </interactant>
    <interactant intactId="EBI-11956087">
        <id>Q5HYJ3-3</id>
        <label>FAM76B</label>
    </interactant>
    <organismsDiffer>false</organismsDiffer>
    <experiments>3</experiments>
</comment>
<comment type="interaction">
    <interactant intactId="EBI-1044640">
        <id>Q9BYQ4</id>
    </interactant>
    <interactant intactId="EBI-719816">
        <id>Q9NWN3</id>
        <label>FBXO34</label>
    </interactant>
    <organismsDiffer>false</organismsDiffer>
    <experiments>3</experiments>
</comment>
<comment type="interaction">
    <interactant intactId="EBI-1044640">
        <id>Q9BYQ4</id>
    </interactant>
    <interactant intactId="EBI-3909284">
        <id>P15976</id>
        <label>GATA1</label>
    </interactant>
    <organismsDiffer>false</organismsDiffer>
    <experiments>3</experiments>
</comment>
<comment type="interaction">
    <interactant intactId="EBI-1044640">
        <id>Q9BYQ4</id>
    </interactant>
    <interactant intactId="EBI-356700">
        <id>P57678</id>
        <label>GEMIN4</label>
    </interactant>
    <organismsDiffer>false</organismsDiffer>
    <experiments>3</experiments>
</comment>
<comment type="interaction">
    <interactant intactId="EBI-1044640">
        <id>Q9BYQ4</id>
    </interactant>
    <interactant intactId="EBI-374781">
        <id>O76003</id>
        <label>GLRX3</label>
    </interactant>
    <organismsDiffer>false</organismsDiffer>
    <experiments>8</experiments>
</comment>
<comment type="interaction">
    <interactant intactId="EBI-1044640">
        <id>Q9BYQ4</id>
    </interactant>
    <interactant intactId="EBI-4291090">
        <id>Q9Y223</id>
        <label>GNE</label>
    </interactant>
    <organismsDiffer>false</organismsDiffer>
    <experiments>3</experiments>
</comment>
<comment type="interaction">
    <interactant intactId="EBI-1044640">
        <id>Q9BYQ4</id>
    </interactant>
    <interactant intactId="EBI-11975289">
        <id>Q9Y223-2</id>
        <label>GNE</label>
    </interactant>
    <organismsDiffer>false</organismsDiffer>
    <experiments>3</experiments>
</comment>
<comment type="interaction">
    <interactant intactId="EBI-1044640">
        <id>Q9BYQ4</id>
    </interactant>
    <interactant intactId="EBI-11427343">
        <id>Q9P2W3</id>
        <label>GNG13</label>
    </interactant>
    <organismsDiffer>false</organismsDiffer>
    <experiments>3</experiments>
</comment>
<comment type="interaction">
    <interactant intactId="EBI-1044640">
        <id>Q9BYQ4</id>
    </interactant>
    <interactant intactId="EBI-11978177">
        <id>Q96NT3-2</id>
        <label>GUCD1</label>
    </interactant>
    <organismsDiffer>false</organismsDiffer>
    <experiments>3</experiments>
</comment>
<comment type="interaction">
    <interactant intactId="EBI-1044640">
        <id>Q9BYQ4</id>
    </interactant>
    <interactant intactId="EBI-11956675">
        <id>Q9GZV7</id>
        <label>HAPLN2</label>
    </interactant>
    <organismsDiffer>false</organismsDiffer>
    <experiments>3</experiments>
</comment>
<comment type="interaction">
    <interactant intactId="EBI-1044640">
        <id>Q9BYQ4</id>
    </interactant>
    <interactant intactId="EBI-740785">
        <id>P49639</id>
        <label>HOXA1</label>
    </interactant>
    <organismsDiffer>false</organismsDiffer>
    <experiments>13</experiments>
</comment>
<comment type="interaction">
    <interactant intactId="EBI-1044640">
        <id>Q9BYQ4</id>
    </interactant>
    <interactant intactId="EBI-466029">
        <id>P42858</id>
        <label>HTT</label>
    </interactant>
    <organismsDiffer>false</organismsDiffer>
    <experiments>9</experiments>
</comment>
<comment type="interaction">
    <interactant intactId="EBI-1044640">
        <id>Q9BYQ4</id>
    </interactant>
    <interactant intactId="EBI-11051601">
        <id>P16144-2</id>
        <label>ITGB4</label>
    </interactant>
    <organismsDiffer>false</organismsDiffer>
    <experiments>3</experiments>
</comment>
<comment type="interaction">
    <interactant intactId="EBI-1044640">
        <id>Q9BYQ4</id>
    </interactant>
    <interactant intactId="EBI-2510602">
        <id>Q15040</id>
        <label>JOSD1</label>
    </interactant>
    <organismsDiffer>false</organismsDiffer>
    <experiments>6</experiments>
</comment>
<comment type="interaction">
    <interactant intactId="EBI-1044640">
        <id>Q9BYQ4</id>
    </interactant>
    <interactant intactId="EBI-6426443">
        <id>Q2WGJ6</id>
        <label>KLHL38</label>
    </interactant>
    <organismsDiffer>false</organismsDiffer>
    <experiments>5</experiments>
</comment>
<comment type="interaction">
    <interactant intactId="EBI-1044640">
        <id>Q9BYQ4</id>
    </interactant>
    <interactant intactId="EBI-948001">
        <id>Q15323</id>
        <label>KRT31</label>
    </interactant>
    <organismsDiffer>false</organismsDiffer>
    <experiments>3</experiments>
</comment>
<comment type="interaction">
    <interactant intactId="EBI-1044640">
        <id>Q9BYQ4</id>
    </interactant>
    <interactant intactId="EBI-11959885">
        <id>Q07627</id>
        <label>KRTAP1-1</label>
    </interactant>
    <organismsDiffer>false</organismsDiffer>
    <experiments>3</experiments>
</comment>
<comment type="interaction">
    <interactant intactId="EBI-1044640">
        <id>Q9BYQ4</id>
    </interactant>
    <interactant intactId="EBI-11749135">
        <id>Q8IUG1</id>
        <label>KRTAP1-3</label>
    </interactant>
    <organismsDiffer>false</organismsDiffer>
    <experiments>3</experiments>
</comment>
<comment type="interaction">
    <interactant intactId="EBI-1044640">
        <id>Q9BYQ4</id>
    </interactant>
    <interactant intactId="EBI-11741292">
        <id>Q9BYS1</id>
        <label>KRTAP1-5</label>
    </interactant>
    <organismsDiffer>false</organismsDiffer>
    <experiments>3</experiments>
</comment>
<comment type="interaction">
    <interactant intactId="EBI-1044640">
        <id>Q9BYQ4</id>
    </interactant>
    <interactant intactId="EBI-10217483">
        <id>P60412</id>
        <label>KRTAP10-11</label>
    </interactant>
    <organismsDiffer>false</organismsDiffer>
    <experiments>6</experiments>
</comment>
<comment type="interaction">
    <interactant intactId="EBI-1044640">
        <id>Q9BYQ4</id>
    </interactant>
    <interactant intactId="EBI-10172150">
        <id>P60370</id>
        <label>KRTAP10-5</label>
    </interactant>
    <organismsDiffer>false</organismsDiffer>
    <experiments>5</experiments>
</comment>
<comment type="interaction">
    <interactant intactId="EBI-1044640">
        <id>Q9BYQ4</id>
    </interactant>
    <interactant intactId="EBI-10172290">
        <id>P60409</id>
        <label>KRTAP10-7</label>
    </interactant>
    <organismsDiffer>false</organismsDiffer>
    <experiments>6</experiments>
</comment>
<comment type="interaction">
    <interactant intactId="EBI-1044640">
        <id>Q9BYQ4</id>
    </interactant>
    <interactant intactId="EBI-10171774">
        <id>P60410</id>
        <label>KRTAP10-8</label>
    </interactant>
    <organismsDiffer>false</organismsDiffer>
    <experiments>11</experiments>
</comment>
<comment type="interaction">
    <interactant intactId="EBI-1044640">
        <id>Q9BYQ4</id>
    </interactant>
    <interactant intactId="EBI-10172052">
        <id>P60411</id>
        <label>KRTAP10-9</label>
    </interactant>
    <organismsDiffer>false</organismsDiffer>
    <experiments>9</experiments>
</comment>
<comment type="interaction">
    <interactant intactId="EBI-1044640">
        <id>Q9BYQ4</id>
    </interactant>
    <interactant intactId="EBI-1052037">
        <id>Q8IUC1</id>
        <label>KRTAP11-1</label>
    </interactant>
    <organismsDiffer>false</organismsDiffer>
    <experiments>3</experiments>
</comment>
<comment type="interaction">
    <interactant intactId="EBI-1044640">
        <id>Q9BYQ4</id>
    </interactant>
    <interactant intactId="EBI-10210845">
        <id>P59990</id>
        <label>KRTAP12-1</label>
    </interactant>
    <organismsDiffer>false</organismsDiffer>
    <experiments>3</experiments>
</comment>
<comment type="interaction">
    <interactant intactId="EBI-1044640">
        <id>Q9BYQ4</id>
    </interactant>
    <interactant intactId="EBI-11953334">
        <id>P60328</id>
        <label>KRTAP12-3</label>
    </interactant>
    <organismsDiffer>false</organismsDiffer>
    <experiments>3</experiments>
</comment>
<comment type="interaction">
    <interactant intactId="EBI-1044640">
        <id>Q9BYQ4</id>
    </interactant>
    <interactant intactId="EBI-11953846">
        <id>Q52LG2</id>
        <label>KRTAP13-2</label>
    </interactant>
    <organismsDiffer>false</organismsDiffer>
    <experiments>3</experiments>
</comment>
<comment type="interaction">
    <interactant intactId="EBI-1044640">
        <id>Q9BYQ4</id>
    </interactant>
    <interactant intactId="EBI-10241252">
        <id>Q3SY46</id>
        <label>KRTAP13-3</label>
    </interactant>
    <organismsDiffer>false</organismsDiffer>
    <experiments>3</experiments>
</comment>
<comment type="interaction">
    <interactant intactId="EBI-1044640">
        <id>Q9BYQ4</id>
    </interactant>
    <interactant intactId="EBI-11992140">
        <id>Q3LI76</id>
        <label>KRTAP15-1</label>
    </interactant>
    <organismsDiffer>false</organismsDiffer>
    <experiments>3</experiments>
</comment>
<comment type="interaction">
    <interactant intactId="EBI-1044640">
        <id>Q9BYQ4</id>
    </interactant>
    <interactant intactId="EBI-11988175">
        <id>Q9BYP8</id>
        <label>KRTAP17-1</label>
    </interactant>
    <organismsDiffer>false</organismsDiffer>
    <experiments>3</experiments>
</comment>
<comment type="interaction">
    <interactant intactId="EBI-1044640">
        <id>Q9BYQ4</id>
    </interactant>
    <interactant intactId="EBI-10241353">
        <id>Q3SYF9</id>
        <label>KRTAP19-7</label>
    </interactant>
    <organismsDiffer>false</organismsDiffer>
    <experiments>3</experiments>
</comment>
<comment type="interaction">
    <interactant intactId="EBI-1044640">
        <id>Q9BYQ4</id>
    </interactant>
    <interactant intactId="EBI-14065470">
        <id>Q9BYR9</id>
        <label>KRTAP2-4</label>
    </interactant>
    <organismsDiffer>false</organismsDiffer>
    <experiments>3</experiments>
</comment>
<comment type="interaction">
    <interactant intactId="EBI-1044640">
        <id>Q9BYQ4</id>
    </interactant>
    <interactant intactId="EBI-3957672">
        <id>Q6PEX3</id>
        <label>KRTAP26-1</label>
    </interactant>
    <organismsDiffer>false</organismsDiffer>
    <experiments>6</experiments>
</comment>
<comment type="interaction">
    <interactant intactId="EBI-1044640">
        <id>Q9BYQ4</id>
    </interactant>
    <interactant intactId="EBI-751260">
        <id>Q9BYR7</id>
        <label>KRTAP3-2</label>
    </interactant>
    <organismsDiffer>false</organismsDiffer>
    <experiments>3</experiments>
</comment>
<comment type="interaction">
    <interactant intactId="EBI-1044640">
        <id>Q9BYQ4</id>
    </interactant>
    <interactant intactId="EBI-10302392">
        <id>Q9BYQ6</id>
        <label>KRTAP4-11</label>
    </interactant>
    <organismsDiffer>false</organismsDiffer>
    <experiments>6</experiments>
</comment>
<comment type="interaction">
    <interactant intactId="EBI-1044640">
        <id>Q9BYQ4</id>
    </interactant>
    <interactant intactId="EBI-739863">
        <id>Q9BQ66</id>
        <label>KRTAP4-12</label>
    </interactant>
    <organismsDiffer>false</organismsDiffer>
    <experiments>8</experiments>
</comment>
<comment type="interaction">
    <interactant intactId="EBI-1044640">
        <id>Q9BYQ4</id>
    </interactant>
    <interactant intactId="EBI-10172511">
        <id>Q9BYR5</id>
        <label>KRTAP4-2</label>
    </interactant>
    <organismsDiffer>false</organismsDiffer>
    <experiments>8</experiments>
</comment>
<comment type="interaction">
    <interactant intactId="EBI-1044640">
        <id>Q9BYQ4</id>
    </interactant>
    <interactant intactId="EBI-11958132">
        <id>Q9BYR3</id>
        <label>KRTAP4-4</label>
    </interactant>
    <organismsDiffer>false</organismsDiffer>
    <experiments>3</experiments>
</comment>
<comment type="interaction">
    <interactant intactId="EBI-1044640">
        <id>Q9BYQ4</id>
    </interactant>
    <interactant intactId="EBI-10302547">
        <id>Q9BYR0</id>
        <label>KRTAP4-7</label>
    </interactant>
    <organismsDiffer>false</organismsDiffer>
    <experiments>3</experiments>
</comment>
<comment type="interaction">
    <interactant intactId="EBI-1044640">
        <id>Q9BYQ4</id>
    </interactant>
    <interactant intactId="EBI-11993296">
        <id>Q6L8G4</id>
        <label>KRTAP5-11</label>
    </interactant>
    <organismsDiffer>false</organismsDiffer>
    <experiments>5</experiments>
</comment>
<comment type="interaction">
    <interactant intactId="EBI-1044640">
        <id>Q9BYQ4</id>
    </interactant>
    <interactant intactId="EBI-11958178">
        <id>Q701N4</id>
        <label>KRTAP5-2</label>
    </interactant>
    <organismsDiffer>false</organismsDiffer>
    <experiments>4</experiments>
</comment>
<comment type="interaction">
    <interactant intactId="EBI-1044640">
        <id>Q9BYQ4</id>
    </interactant>
    <interactant intactId="EBI-11974251">
        <id>Q6L8H2</id>
        <label>KRTAP5-3</label>
    </interactant>
    <organismsDiffer>false</organismsDiffer>
    <experiments>3</experiments>
</comment>
<comment type="interaction">
    <interactant intactId="EBI-1044640">
        <id>Q9BYQ4</id>
    </interactant>
    <interactant intactId="EBI-11963072">
        <id>Q6L8H1</id>
        <label>KRTAP5-4</label>
    </interactant>
    <organismsDiffer>false</organismsDiffer>
    <experiments>3</experiments>
</comment>
<comment type="interaction">
    <interactant intactId="EBI-1044640">
        <id>Q9BYQ4</id>
    </interactant>
    <interactant intactId="EBI-10250562">
        <id>Q6L8G9</id>
        <label>KRTAP5-6</label>
    </interactant>
    <organismsDiffer>false</organismsDiffer>
    <experiments>8</experiments>
</comment>
<comment type="interaction">
    <interactant intactId="EBI-1044640">
        <id>Q9BYQ4</id>
    </interactant>
    <interactant intactId="EBI-11987425">
        <id>Q6L8G8</id>
        <label>KRTAP5-7</label>
    </interactant>
    <organismsDiffer>false</organismsDiffer>
    <experiments>3</experiments>
</comment>
<comment type="interaction">
    <interactant intactId="EBI-1044640">
        <id>Q9BYQ4</id>
    </interactant>
    <interactant intactId="EBI-3958099">
        <id>P26371</id>
        <label>KRTAP5-9</label>
    </interactant>
    <organismsDiffer>false</organismsDiffer>
    <experiments>6</experiments>
</comment>
<comment type="interaction">
    <interactant intactId="EBI-1044640">
        <id>Q9BYQ4</id>
    </interactant>
    <interactant intactId="EBI-1044640">
        <id>Q9BYQ4</id>
        <label>KRTAP9-2</label>
    </interactant>
    <organismsDiffer>false</organismsDiffer>
    <experiments>6</experiments>
</comment>
<comment type="interaction">
    <interactant intactId="EBI-1044640">
        <id>Q9BYQ4</id>
    </interactant>
    <interactant intactId="EBI-1043191">
        <id>Q9BYQ3</id>
        <label>KRTAP9-3</label>
    </interactant>
    <organismsDiffer>false</organismsDiffer>
    <experiments>3</experiments>
</comment>
<comment type="interaction">
    <interactant intactId="EBI-1044640">
        <id>Q9BYQ4</id>
    </interactant>
    <interactant intactId="EBI-10185730">
        <id>Q9BYQ2</id>
        <label>KRTAP9-4</label>
    </interactant>
    <organismsDiffer>false</organismsDiffer>
    <experiments>3</experiments>
</comment>
<comment type="interaction">
    <interactant intactId="EBI-1044640">
        <id>Q9BYQ4</id>
    </interactant>
    <interactant intactId="EBI-11958364">
        <id>Q9BYQ0</id>
        <label>KRTAP9-8</label>
    </interactant>
    <organismsDiffer>false</organismsDiffer>
    <experiments>3</experiments>
</comment>
<comment type="interaction">
    <interactant intactId="EBI-1044640">
        <id>Q9BYQ4</id>
    </interactant>
    <interactant intactId="EBI-20141748">
        <id>P52954</id>
        <label>LBX1</label>
    </interactant>
    <organismsDiffer>false</organismsDiffer>
    <experiments>3</experiments>
</comment>
<comment type="interaction">
    <interactant intactId="EBI-1044640">
        <id>Q9BYQ4</id>
    </interactant>
    <interactant intactId="EBI-11962058">
        <id>Q5T7P2</id>
        <label>LCE1A</label>
    </interactant>
    <organismsDiffer>false</organismsDiffer>
    <experiments>3</experiments>
</comment>
<comment type="interaction">
    <interactant intactId="EBI-1044640">
        <id>Q9BYQ4</id>
    </interactant>
    <interactant intactId="EBI-10245913">
        <id>Q5T7P3</id>
        <label>LCE1B</label>
    </interactant>
    <organismsDiffer>false</organismsDiffer>
    <experiments>11</experiments>
</comment>
<comment type="interaction">
    <interactant intactId="EBI-1044640">
        <id>Q9BYQ4</id>
    </interactant>
    <interactant intactId="EBI-11741311">
        <id>Q5T752</id>
        <label>LCE1D</label>
    </interactant>
    <organismsDiffer>false</organismsDiffer>
    <experiments>3</experiments>
</comment>
<comment type="interaction">
    <interactant intactId="EBI-1044640">
        <id>Q9BYQ4</id>
    </interactant>
    <interactant intactId="EBI-11955335">
        <id>Q5T753</id>
        <label>LCE1E</label>
    </interactant>
    <organismsDiffer>false</organismsDiffer>
    <experiments>5</experiments>
</comment>
<comment type="interaction">
    <interactant intactId="EBI-1044640">
        <id>Q9BYQ4</id>
    </interactant>
    <interactant intactId="EBI-11958008">
        <id>Q5T754</id>
        <label>LCE1F</label>
    </interactant>
    <organismsDiffer>false</organismsDiffer>
    <experiments>3</experiments>
</comment>
<comment type="interaction">
    <interactant intactId="EBI-1044640">
        <id>Q9BYQ4</id>
    </interactant>
    <interactant intactId="EBI-10246607">
        <id>Q5TA79</id>
        <label>LCE2A</label>
    </interactant>
    <organismsDiffer>false</organismsDiffer>
    <experiments>6</experiments>
</comment>
<comment type="interaction">
    <interactant intactId="EBI-1044640">
        <id>Q9BYQ4</id>
    </interactant>
    <interactant intactId="EBI-11478468">
        <id>O14633</id>
        <label>LCE2B</label>
    </interactant>
    <organismsDiffer>false</organismsDiffer>
    <experiments>5</experiments>
</comment>
<comment type="interaction">
    <interactant intactId="EBI-1044640">
        <id>Q9BYQ4</id>
    </interactant>
    <interactant intactId="EBI-11973993">
        <id>Q5TA81</id>
        <label>LCE2C</label>
    </interactant>
    <organismsDiffer>false</organismsDiffer>
    <experiments>3</experiments>
</comment>
<comment type="interaction">
    <interactant intactId="EBI-1044640">
        <id>Q9BYQ4</id>
    </interactant>
    <interactant intactId="EBI-9394625">
        <id>Q5TA76</id>
        <label>LCE3A</label>
    </interactant>
    <organismsDiffer>false</organismsDiffer>
    <experiments>8</experiments>
</comment>
<comment type="interaction">
    <interactant intactId="EBI-1044640">
        <id>Q9BYQ4</id>
    </interactant>
    <interactant intactId="EBI-11974495">
        <id>Q5TA77</id>
        <label>LCE3B</label>
    </interactant>
    <organismsDiffer>false</organismsDiffer>
    <experiments>3</experiments>
</comment>
<comment type="interaction">
    <interactant intactId="EBI-1044640">
        <id>Q9BYQ4</id>
    </interactant>
    <interactant intactId="EBI-10245291">
        <id>Q5T5A8</id>
        <label>LCE3C</label>
    </interactant>
    <organismsDiffer>false</organismsDiffer>
    <experiments>3</experiments>
</comment>
<comment type="interaction">
    <interactant intactId="EBI-1044640">
        <id>Q9BYQ4</id>
    </interactant>
    <interactant intactId="EBI-6658837">
        <id>Q9BYE3</id>
        <label>LCE3D</label>
    </interactant>
    <organismsDiffer>false</organismsDiffer>
    <experiments>8</experiments>
</comment>
<comment type="interaction">
    <interactant intactId="EBI-1044640">
        <id>Q9BYQ4</id>
    </interactant>
    <interactant intactId="EBI-10245456">
        <id>Q5T5B0</id>
        <label>LCE3E</label>
    </interactant>
    <organismsDiffer>false</organismsDiffer>
    <experiments>6</experiments>
</comment>
<comment type="interaction">
    <interactant intactId="EBI-1044640">
        <id>Q9BYQ4</id>
    </interactant>
    <interactant intactId="EBI-10246358">
        <id>Q5TA78</id>
        <label>LCE4A</label>
    </interactant>
    <organismsDiffer>false</organismsDiffer>
    <experiments>9</experiments>
</comment>
<comment type="interaction">
    <interactant intactId="EBI-1044640">
        <id>Q9BYQ4</id>
    </interactant>
    <interactant intactId="EBI-11955689">
        <id>Q5TCM9</id>
        <label>LCE5A</label>
    </interactant>
    <organismsDiffer>false</organismsDiffer>
    <experiments>8</experiments>
</comment>
<comment type="interaction">
    <interactant intactId="EBI-1044640">
        <id>Q9BYQ4</id>
    </interactant>
    <interactant intactId="EBI-18115868">
        <id>Q5T871</id>
        <label>LELP1</label>
    </interactant>
    <organismsDiffer>false</organismsDiffer>
    <experiments>3</experiments>
</comment>
<comment type="interaction">
    <interactant intactId="EBI-1044640">
        <id>Q9BYQ4</id>
    </interactant>
    <interactant intactId="EBI-719955">
        <id>Q96FE5</id>
        <label>LINGO1</label>
    </interactant>
    <organismsDiffer>false</organismsDiffer>
    <experiments>3</experiments>
</comment>
<comment type="interaction">
    <interactant intactId="EBI-1044640">
        <id>Q9BYQ4</id>
    </interactant>
    <interactant intactId="EBI-12028858">
        <id>Q8IXW0</id>
        <label>LMNTD2</label>
    </interactant>
    <organismsDiffer>false</organismsDiffer>
    <experiments>3</experiments>
</comment>
<comment type="interaction">
    <interactant intactId="EBI-1044640">
        <id>Q9BYQ4</id>
    </interactant>
    <interactant intactId="EBI-739832">
        <id>Q8TBB1</id>
        <label>LNX1</label>
    </interactant>
    <organismsDiffer>false</organismsDiffer>
    <experiments>3</experiments>
</comment>
<comment type="interaction">
    <interactant intactId="EBI-1044640">
        <id>Q9BYQ4</id>
    </interactant>
    <interactant intactId="EBI-10329546">
        <id>Q9Y5Y7</id>
        <label>LYVE1</label>
    </interactant>
    <organismsDiffer>false</organismsDiffer>
    <experiments>3</experiments>
</comment>
<comment type="interaction">
    <interactant intactId="EBI-1044640">
        <id>Q9BYQ4</id>
    </interactant>
    <interactant intactId="EBI-947402">
        <id>O60336</id>
        <label>MAPKBP1</label>
    </interactant>
    <organismsDiffer>false</organismsDiffer>
    <experiments>3</experiments>
</comment>
<comment type="interaction">
    <interactant intactId="EBI-1044640">
        <id>Q9BYQ4</id>
    </interactant>
    <interactant intactId="EBI-748397">
        <id>P50222</id>
        <label>MEOX2</label>
    </interactant>
    <organismsDiffer>false</organismsDiffer>
    <experiments>3</experiments>
</comment>
<comment type="interaction">
    <interactant intactId="EBI-1044640">
        <id>Q9BYQ4</id>
    </interactant>
    <interactant intactId="EBI-16439278">
        <id>Q6FHY5</id>
        <label>MEOX2</label>
    </interactant>
    <organismsDiffer>false</organismsDiffer>
    <experiments>3</experiments>
</comment>
<comment type="interaction">
    <interactant intactId="EBI-1044640">
        <id>Q9BYQ4</id>
    </interactant>
    <interactant intactId="EBI-945833">
        <id>Q7Z3S9</id>
        <label>NOTCH2NLA</label>
    </interactant>
    <organismsDiffer>false</organismsDiffer>
    <experiments>3</experiments>
</comment>
<comment type="interaction">
    <interactant intactId="EBI-1044640">
        <id>Q9BYQ4</id>
    </interactant>
    <interactant intactId="EBI-22310682">
        <id>P0DPK4</id>
        <label>NOTCH2NLC</label>
    </interactant>
    <organismsDiffer>false</organismsDiffer>
    <experiments>3</experiments>
</comment>
<comment type="interaction">
    <interactant intactId="EBI-1044640">
        <id>Q9BYQ4</id>
    </interactant>
    <interactant intactId="EBI-10250949">
        <id>Q6NSM0</id>
        <label>NR1D2</label>
    </interactant>
    <organismsDiffer>false</organismsDiffer>
    <experiments>5</experiments>
</comment>
<comment type="interaction">
    <interactant intactId="EBI-1044640">
        <id>Q9BYQ4</id>
    </interactant>
    <interactant intactId="EBI-13644623">
        <id>Q92570</id>
        <label>NR4A3</label>
    </interactant>
    <organismsDiffer>false</organismsDiffer>
    <experiments>3</experiments>
</comment>
<comment type="interaction">
    <interactant intactId="EBI-1044640">
        <id>Q9BYQ4</id>
    </interactant>
    <interactant intactId="EBI-741158">
        <id>Q96HA8</id>
        <label>NTAQ1</label>
    </interactant>
    <organismsDiffer>false</organismsDiffer>
    <experiments>6</experiments>
</comment>
<comment type="interaction">
    <interactant intactId="EBI-1044640">
        <id>Q9BYQ4</id>
    </interactant>
    <interactant intactId="EBI-1210753">
        <id>Q7Z417</id>
        <label>NUFIP2</label>
    </interactant>
    <organismsDiffer>false</organismsDiffer>
    <experiments>6</experiments>
</comment>
<comment type="interaction">
    <interactant intactId="EBI-1044640">
        <id>Q9BYQ4</id>
    </interactant>
    <interactant intactId="EBI-748974">
        <id>Q96CV9</id>
        <label>OPTN</label>
    </interactant>
    <organismsDiffer>false</organismsDiffer>
    <experiments>3</experiments>
</comment>
<comment type="interaction">
    <interactant intactId="EBI-1044640">
        <id>Q9BYQ4</id>
    </interactant>
    <interactant intactId="EBI-740446">
        <id>P32242</id>
        <label>OTX1</label>
    </interactant>
    <organismsDiffer>false</organismsDiffer>
    <experiments>10</experiments>
</comment>
<comment type="interaction">
    <interactant intactId="EBI-1044640">
        <id>Q9BYQ4</id>
    </interactant>
    <interactant intactId="EBI-10235794">
        <id>Q15077</id>
        <label>P2RY6</label>
    </interactant>
    <organismsDiffer>false</organismsDiffer>
    <experiments>5</experiments>
</comment>
<comment type="interaction">
    <interactant intactId="EBI-1044640">
        <id>Q9BYQ4</id>
    </interactant>
    <interactant intactId="EBI-12149899">
        <id>Q8IVL6-2</id>
        <label>P3H3</label>
    </interactant>
    <organismsDiffer>false</organismsDiffer>
    <experiments>3</experiments>
</comment>
<comment type="interaction">
    <interactant intactId="EBI-1044640">
        <id>Q9BYQ4</id>
    </interactant>
    <interactant intactId="EBI-1164361">
        <id>Q99497</id>
        <label>PARK7</label>
    </interactant>
    <organismsDiffer>false</organismsDiffer>
    <experiments>3</experiments>
</comment>
<comment type="interaction">
    <interactant intactId="EBI-1044640">
        <id>Q9BYQ4</id>
    </interactant>
    <interactant intactId="EBI-742764">
        <id>O76083</id>
        <label>PDE9A</label>
    </interactant>
    <organismsDiffer>false</organismsDiffer>
    <experiments>3</experiments>
</comment>
<comment type="interaction">
    <interactant intactId="EBI-1044640">
        <id>Q9BYQ4</id>
    </interactant>
    <interactant intactId="EBI-14084211">
        <id>A2BDE7</id>
        <label>PHLDA1</label>
    </interactant>
    <organismsDiffer>false</organismsDiffer>
    <experiments>3</experiments>
</comment>
<comment type="interaction">
    <interactant intactId="EBI-1044640">
        <id>Q9BYQ4</id>
    </interactant>
    <interactant intactId="EBI-2908273">
        <id>Q96S52</id>
        <label>PIGS</label>
    </interactant>
    <organismsDiffer>false</organismsDiffer>
    <experiments>3</experiments>
</comment>
<comment type="interaction">
    <interactant intactId="EBI-1044640">
        <id>Q9BYQ4</id>
    </interactant>
    <interactant intactId="EBI-3919291">
        <id>Q9Y342</id>
        <label>PLLP</label>
    </interactant>
    <organismsDiffer>false</organismsDiffer>
    <experiments>3</experiments>
</comment>
<comment type="interaction">
    <interactant intactId="EBI-1044640">
        <id>Q9BYQ4</id>
    </interactant>
    <interactant intactId="EBI-740019">
        <id>O15162</id>
        <label>PLSCR1</label>
    </interactant>
    <organismsDiffer>false</organismsDiffer>
    <experiments>3</experiments>
</comment>
<comment type="interaction">
    <interactant intactId="EBI-1044640">
        <id>Q9BYQ4</id>
    </interactant>
    <interactant intactId="EBI-18165900">
        <id>A0JP26</id>
        <label>POTEB3</label>
    </interactant>
    <organismsDiffer>false</organismsDiffer>
    <experiments>3</experiments>
</comment>
<comment type="interaction">
    <interactant intactId="EBI-1044640">
        <id>Q9BYQ4</id>
    </interactant>
    <interactant intactId="EBI-17236143">
        <id>Q12837</id>
        <label>POU4F2</label>
    </interactant>
    <organismsDiffer>false</organismsDiffer>
    <experiments>6</experiments>
</comment>
<comment type="interaction">
    <interactant intactId="EBI-1044640">
        <id>Q9BYQ4</id>
    </interactant>
    <interactant intactId="EBI-1053424">
        <id>O43741</id>
        <label>PRKAB2</label>
    </interactant>
    <organismsDiffer>false</organismsDiffer>
    <experiments>8</experiments>
</comment>
<comment type="interaction">
    <interactant intactId="EBI-1044640">
        <id>Q9BYQ4</id>
    </interactant>
    <interactant intactId="EBI-1181439">
        <id>P54619</id>
        <label>PRKAG1</label>
    </interactant>
    <organismsDiffer>false</organismsDiffer>
    <experiments>3</experiments>
</comment>
<comment type="interaction">
    <interactant intactId="EBI-1044640">
        <id>Q9BYQ4</id>
    </interactant>
    <interactant intactId="EBI-21251460">
        <id>O60260-5</id>
        <label>PRKN</label>
    </interactant>
    <organismsDiffer>false</organismsDiffer>
    <experiments>3</experiments>
</comment>
<comment type="interaction">
    <interactant intactId="EBI-1044640">
        <id>Q9BYQ4</id>
    </interactant>
    <interactant intactId="EBI-11047108">
        <id>P49768-2</id>
        <label>PSEN1</label>
    </interactant>
    <organismsDiffer>false</organismsDiffer>
    <experiments>3</experiments>
</comment>
<comment type="interaction">
    <interactant intactId="EBI-1044640">
        <id>Q9BYQ4</id>
    </interactant>
    <interactant intactId="EBI-7199479">
        <id>Q8WUK0</id>
        <label>PTPMT1</label>
    </interactant>
    <organismsDiffer>false</organismsDiffer>
    <experiments>6</experiments>
</comment>
<comment type="interaction">
    <interactant intactId="EBI-1044640">
        <id>Q9BYQ4</id>
    </interactant>
    <interactant intactId="EBI-947779">
        <id>Q96PM5</id>
        <label>RCHY1</label>
    </interactant>
    <organismsDiffer>false</organismsDiffer>
    <experiments>3</experiments>
</comment>
<comment type="interaction">
    <interactant intactId="EBI-1044640">
        <id>Q9BYQ4</id>
    </interactant>
    <interactant intactId="EBI-10225152">
        <id>Q96EP0-3</id>
        <label>RNF31</label>
    </interactant>
    <organismsDiffer>false</organismsDiffer>
    <experiments>3</experiments>
</comment>
<comment type="interaction">
    <interactant intactId="EBI-1044640">
        <id>Q9BYQ4</id>
    </interactant>
    <interactant intactId="EBI-373337">
        <id>O76064</id>
        <label>RNF8</label>
    </interactant>
    <organismsDiffer>false</organismsDiffer>
    <experiments>3</experiments>
</comment>
<comment type="interaction">
    <interactant intactId="EBI-1044640">
        <id>Q9BYQ4</id>
    </interactant>
    <interactant intactId="EBI-10204280">
        <id>A0A0S2Z4U3</id>
        <label>SDC3</label>
    </interactant>
    <organismsDiffer>false</organismsDiffer>
    <experiments>3</experiments>
</comment>
<comment type="interaction">
    <interactant intactId="EBI-1044640">
        <id>Q9BYQ4</id>
    </interactant>
    <interactant intactId="EBI-10313866">
        <id>Q9NUL5</id>
        <label>SHFL</label>
    </interactant>
    <organismsDiffer>false</organismsDiffer>
    <experiments>3</experiments>
</comment>
<comment type="interaction">
    <interactant intactId="EBI-1044640">
        <id>Q9BYQ4</id>
    </interactant>
    <interactant intactId="EBI-11955083">
        <id>Q9NUL5-4</id>
        <label>SHFL</label>
    </interactant>
    <organismsDiffer>false</organismsDiffer>
    <experiments>3</experiments>
</comment>
<comment type="interaction">
    <interactant intactId="EBI-1044640">
        <id>Q9BYQ4</id>
    </interactant>
    <interactant intactId="EBI-12002412">
        <id>Q86YT5</id>
        <label>SLC13A5</label>
    </interactant>
    <organismsDiffer>false</organismsDiffer>
    <experiments>3</experiments>
</comment>
<comment type="interaction">
    <interactant intactId="EBI-1044640">
        <id>Q9BYQ4</id>
    </interactant>
    <interactant intactId="EBI-1051105">
        <id>Q92504</id>
        <label>SLC39A7</label>
    </interactant>
    <organismsDiffer>false</organismsDiffer>
    <experiments>3</experiments>
</comment>
<comment type="interaction">
    <interactant intactId="EBI-1044640">
        <id>Q9BYQ4</id>
    </interactant>
    <interactant intactId="EBI-750494">
        <id>P49901</id>
        <label>SMCP</label>
    </interactant>
    <organismsDiffer>false</organismsDiffer>
    <experiments>8</experiments>
</comment>
<comment type="interaction">
    <interactant intactId="EBI-1044640">
        <id>Q9BYQ4</id>
    </interactant>
    <interactant intactId="EBI-985879">
        <id>P37840</id>
        <label>SNCA</label>
    </interactant>
    <organismsDiffer>false</organismsDiffer>
    <experiments>3</experiments>
</comment>
<comment type="interaction">
    <interactant intactId="EBI-1044640">
        <id>Q9BYQ4</id>
    </interactant>
    <interactant intactId="EBI-8635958">
        <id>Q6RVD6</id>
        <label>SPATA8</label>
    </interactant>
    <organismsDiffer>false</organismsDiffer>
    <experiments>3</experiments>
</comment>
<comment type="interaction">
    <interactant intactId="EBI-1044640">
        <id>Q9BYQ4</id>
    </interactant>
    <interactant intactId="EBI-3866665">
        <id>O43609</id>
        <label>SPRY1</label>
    </interactant>
    <organismsDiffer>false</organismsDiffer>
    <experiments>3</experiments>
</comment>
<comment type="interaction">
    <interactant intactId="EBI-1044640">
        <id>Q9BYQ4</id>
    </interactant>
    <interactant intactId="EBI-742487">
        <id>O43597</id>
        <label>SPRY2</label>
    </interactant>
    <organismsDiffer>false</organismsDiffer>
    <experiments>3</experiments>
</comment>
<comment type="interaction">
    <interactant intactId="EBI-1044640">
        <id>Q9BYQ4</id>
    </interactant>
    <interactant intactId="EBI-10175576">
        <id>G2XKQ0</id>
        <label>SUMO1P1</label>
    </interactant>
    <organismsDiffer>false</organismsDiffer>
    <experiments>3</experiments>
</comment>
<comment type="interaction">
    <interactant intactId="EBI-1044640">
        <id>Q9BYQ4</id>
    </interactant>
    <interactant intactId="EBI-372899">
        <id>Q13148</id>
        <label>TARDBP</label>
    </interactant>
    <organismsDiffer>false</organismsDiffer>
    <experiments>6</experiments>
</comment>
<comment type="interaction">
    <interactant intactId="EBI-1044640">
        <id>Q9BYQ4</id>
    </interactant>
    <interactant intactId="EBI-11952651">
        <id>Q7Z6R9</id>
        <label>TFAP2D</label>
    </interactant>
    <organismsDiffer>false</organismsDiffer>
    <experiments>5</experiments>
</comment>
<comment type="interaction">
    <interactant intactId="EBI-1044640">
        <id>Q9BYQ4</id>
    </interactant>
    <interactant intactId="EBI-10278423">
        <id>Q8WZ59</id>
        <label>TMEM190</label>
    </interactant>
    <organismsDiffer>false</organismsDiffer>
    <experiments>3</experiments>
</comment>
<comment type="interaction">
    <interactant intactId="EBI-1044640">
        <id>Q9BYQ4</id>
    </interactant>
    <interactant intactId="EBI-2688673">
        <id>P63313</id>
        <label>TMSB10</label>
    </interactant>
    <organismsDiffer>false</organismsDiffer>
    <experiments>3</experiments>
</comment>
<comment type="interaction">
    <interactant intactId="EBI-1044640">
        <id>Q9BYQ4</id>
    </interactant>
    <interactant intactId="EBI-8652667">
        <id>O14817</id>
        <label>TSPAN4</label>
    </interactant>
    <organismsDiffer>false</organismsDiffer>
    <experiments>3</experiments>
</comment>
<comment type="interaction">
    <interactant intactId="EBI-1044640">
        <id>Q9BYQ4</id>
    </interactant>
    <interactant intactId="EBI-3951628">
        <id>Q06418</id>
        <label>TYRO3</label>
    </interactant>
    <organismsDiffer>false</organismsDiffer>
    <experiments>3</experiments>
</comment>
<comment type="interaction">
    <interactant intactId="EBI-1044640">
        <id>Q9BYQ4</id>
    </interactant>
    <interactant intactId="EBI-1188298">
        <id>O95292</id>
        <label>VAPB</label>
    </interactant>
    <organismsDiffer>false</organismsDiffer>
    <experiments>3</experiments>
</comment>
<comment type="interaction">
    <interactant intactId="EBI-1044640">
        <id>Q9BYQ4</id>
    </interactant>
    <interactant intactId="EBI-11957216">
        <id>A8MV65-2</id>
        <label>VGLL3</label>
    </interactant>
    <organismsDiffer>false</organismsDiffer>
    <experiments>3</experiments>
</comment>
<comment type="interaction">
    <interactant intactId="EBI-1044640">
        <id>Q9BYQ4</id>
    </interactant>
    <interactant intactId="EBI-2818796">
        <id>Q8WTX9</id>
        <label>ZDHHC1</label>
    </interactant>
    <organismsDiffer>false</organismsDiffer>
    <experiments>3</experiments>
</comment>
<comment type="interaction">
    <interactant intactId="EBI-1044640">
        <id>Q9BYQ4</id>
    </interactant>
    <interactant intactId="EBI-717634">
        <id>P17024</id>
        <label>ZNF20</label>
    </interactant>
    <organismsDiffer>false</organismsDiffer>
    <experiments>3</experiments>
</comment>
<comment type="interaction">
    <interactant intactId="EBI-1044640">
        <id>Q9BYQ4</id>
    </interactant>
    <interactant intactId="EBI-14069183">
        <id>Q86XF7</id>
        <label>ZNF575</label>
    </interactant>
    <organismsDiffer>false</organismsDiffer>
    <experiments>5</experiments>
</comment>
<comment type="interaction">
    <interactant intactId="EBI-1044640">
        <id>Q9BYQ4</id>
    </interactant>
    <interactant intactId="EBI-11090299">
        <id>Q9H7X3</id>
        <label>ZNF696</label>
    </interactant>
    <organismsDiffer>false</organismsDiffer>
    <experiments>3</experiments>
</comment>
<comment type="similarity">
    <text evidence="3">Belongs to the KRTAP type 9 family.</text>
</comment>
<organism>
    <name type="scientific">Homo sapiens</name>
    <name type="common">Human</name>
    <dbReference type="NCBI Taxonomy" id="9606"/>
    <lineage>
        <taxon>Eukaryota</taxon>
        <taxon>Metazoa</taxon>
        <taxon>Chordata</taxon>
        <taxon>Craniata</taxon>
        <taxon>Vertebrata</taxon>
        <taxon>Euteleostomi</taxon>
        <taxon>Mammalia</taxon>
        <taxon>Eutheria</taxon>
        <taxon>Euarchontoglires</taxon>
        <taxon>Primates</taxon>
        <taxon>Haplorrhini</taxon>
        <taxon>Catarrhini</taxon>
        <taxon>Hominidae</taxon>
        <taxon>Homo</taxon>
    </lineage>
</organism>
<feature type="chain" id="PRO_0000185188" description="Keratin-associated protein 9-2">
    <location>
        <begin position="1"/>
        <end position="174"/>
    </location>
</feature>
<feature type="repeat" description="1">
    <location>
        <begin position="8"/>
        <end position="12"/>
    </location>
</feature>
<feature type="repeat" description="2">
    <location>
        <begin position="13"/>
        <end position="17"/>
    </location>
</feature>
<feature type="repeat" description="3">
    <location>
        <begin position="18"/>
        <end position="22"/>
    </location>
</feature>
<feature type="repeat" description="4">
    <location>
        <begin position="37"/>
        <end position="41"/>
    </location>
</feature>
<feature type="repeat" description="5">
    <location>
        <begin position="42"/>
        <end position="46"/>
    </location>
</feature>
<feature type="repeat" description="6">
    <location>
        <begin position="51"/>
        <end position="55"/>
    </location>
</feature>
<feature type="repeat" description="7">
    <location>
        <begin position="61"/>
        <end position="65"/>
    </location>
</feature>
<feature type="repeat" description="8">
    <location>
        <begin position="66"/>
        <end position="70"/>
    </location>
</feature>
<feature type="repeat" description="9">
    <location>
        <begin position="75"/>
        <end position="79"/>
    </location>
</feature>
<feature type="repeat" description="10">
    <location>
        <begin position="80"/>
        <end position="84"/>
    </location>
</feature>
<feature type="repeat" description="11">
    <location>
        <begin position="85"/>
        <end position="89"/>
    </location>
</feature>
<feature type="repeat" description="12">
    <location>
        <begin position="90"/>
        <end position="94"/>
    </location>
</feature>
<feature type="repeat" description="13">
    <location>
        <begin position="95"/>
        <end position="99"/>
    </location>
</feature>
<feature type="repeat" description="14">
    <location>
        <begin position="144"/>
        <end position="148"/>
    </location>
</feature>
<feature type="repeat" description="15">
    <location>
        <begin position="149"/>
        <end position="153"/>
    </location>
</feature>
<feature type="repeat" description="16">
    <location>
        <begin position="154"/>
        <end position="158"/>
    </location>
</feature>
<feature type="repeat" description="17">
    <location>
        <begin position="168"/>
        <end position="172"/>
    </location>
</feature>
<feature type="region of interest" description="17 X 5 AA repeats of C-C-[RQVSGE]-[SPTQ]-[TASP]">
    <location>
        <begin position="8"/>
        <end position="172"/>
    </location>
</feature>
<feature type="sequence variant" id="VAR_046702" description="In dbSNP:rs9903833." evidence="1 2">
    <original>P</original>
    <variation>S</variation>
    <location>
        <position position="36"/>
    </location>
</feature>
<feature type="sequence variant" id="VAR_046703" description="In dbSNP:rs9902235." evidence="1 2">
    <original>C</original>
    <variation>S</variation>
    <location>
        <position position="56"/>
    </location>
</feature>
<proteinExistence type="evidence at protein level"/>
<accession>Q9BYQ4</accession>
<accession>Q17RK8</accession>
<accession>Q2TB15</accession>
<accession>Q6ISF6</accession>
<reference key="1">
    <citation type="journal article" date="2001" name="J. Biol. Chem.">
        <title>Characterization of a cluster of human high/ultrahigh sulfur keratin-associated protein genes embedded in the type I keratin gene domain on chromosome 17q12-21.</title>
        <authorList>
            <person name="Rogers M.A."/>
            <person name="Langbein L."/>
            <person name="Winter H."/>
            <person name="Ehmann C."/>
            <person name="Praetzel S."/>
            <person name="Korn B."/>
            <person name="Schweizer J."/>
        </authorList>
    </citation>
    <scope>NUCLEOTIDE SEQUENCE [MRNA]</scope>
    <scope>VARIANTS SER-36 AND SER-56</scope>
    <source>
        <tissue>Scalp</tissue>
    </source>
</reference>
<reference key="2">
    <citation type="submission" date="2005-07" db="EMBL/GenBank/DDBJ databases">
        <authorList>
            <person name="Mural R.J."/>
            <person name="Istrail S."/>
            <person name="Sutton G.G."/>
            <person name="Florea L."/>
            <person name="Halpern A.L."/>
            <person name="Mobarry C.M."/>
            <person name="Lippert R."/>
            <person name="Walenz B."/>
            <person name="Shatkay H."/>
            <person name="Dew I."/>
            <person name="Miller J.R."/>
            <person name="Flanigan M.J."/>
            <person name="Edwards N.J."/>
            <person name="Bolanos R."/>
            <person name="Fasulo D."/>
            <person name="Halldorsson B.V."/>
            <person name="Hannenhalli S."/>
            <person name="Turner R."/>
            <person name="Yooseph S."/>
            <person name="Lu F."/>
            <person name="Nusskern D.R."/>
            <person name="Shue B.C."/>
            <person name="Zheng X.H."/>
            <person name="Zhong F."/>
            <person name="Delcher A.L."/>
            <person name="Huson D.H."/>
            <person name="Kravitz S.A."/>
            <person name="Mouchard L."/>
            <person name="Reinert K."/>
            <person name="Remington K.A."/>
            <person name="Clark A.G."/>
            <person name="Waterman M.S."/>
            <person name="Eichler E.E."/>
            <person name="Adams M.D."/>
            <person name="Hunkapiller M.W."/>
            <person name="Myers E.W."/>
            <person name="Venter J.C."/>
        </authorList>
    </citation>
    <scope>NUCLEOTIDE SEQUENCE [LARGE SCALE GENOMIC DNA]</scope>
</reference>
<reference key="3">
    <citation type="journal article" date="2004" name="Genome Res.">
        <title>The status, quality, and expansion of the NIH full-length cDNA project: the Mammalian Gene Collection (MGC).</title>
        <authorList>
            <consortium name="The MGC Project Team"/>
        </authorList>
    </citation>
    <scope>NUCLEOTIDE SEQUENCE [LARGE SCALE MRNA]</scope>
    <scope>VARIANTS SER-36 AND SER-56</scope>
</reference>
<dbReference type="EMBL" id="AJ406946">
    <property type="protein sequence ID" value="CAC27585.1"/>
    <property type="molecule type" value="mRNA"/>
</dbReference>
<dbReference type="EMBL" id="CH471152">
    <property type="protein sequence ID" value="EAW60718.1"/>
    <property type="molecule type" value="Genomic_DNA"/>
</dbReference>
<dbReference type="EMBL" id="BC069560">
    <property type="protein sequence ID" value="AAH69560.1"/>
    <property type="molecule type" value="mRNA"/>
</dbReference>
<dbReference type="EMBL" id="BC110619">
    <property type="protein sequence ID" value="AAI10620.1"/>
    <property type="molecule type" value="mRNA"/>
</dbReference>
<dbReference type="EMBL" id="BC117287">
    <property type="protein sequence ID" value="AAI17288.1"/>
    <property type="molecule type" value="mRNA"/>
</dbReference>
<dbReference type="CCDS" id="CCDS32651.1"/>
<dbReference type="RefSeq" id="NP_114167.2">
    <property type="nucleotide sequence ID" value="NM_031961.2"/>
</dbReference>
<dbReference type="BioGRID" id="123810">
    <property type="interactions" value="149"/>
</dbReference>
<dbReference type="FunCoup" id="Q9BYQ4">
    <property type="interactions" value="56"/>
</dbReference>
<dbReference type="IntAct" id="Q9BYQ4">
    <property type="interactions" value="148"/>
</dbReference>
<dbReference type="STRING" id="9606.ENSP00000366950"/>
<dbReference type="iPTMnet" id="Q9BYQ4"/>
<dbReference type="PhosphoSitePlus" id="Q9BYQ4"/>
<dbReference type="BioMuta" id="KRTAP9-2"/>
<dbReference type="DMDM" id="209572642"/>
<dbReference type="MassIVE" id="Q9BYQ4"/>
<dbReference type="PaxDb" id="9606-ENSP00000366950"/>
<dbReference type="PeptideAtlas" id="Q9BYQ4"/>
<dbReference type="Antibodypedia" id="74944">
    <property type="antibodies" value="7 antibodies from 4 providers"/>
</dbReference>
<dbReference type="DNASU" id="83899"/>
<dbReference type="Ensembl" id="ENST00000377721.3">
    <property type="protein sequence ID" value="ENSP00000366950.3"/>
    <property type="gene ID" value="ENSG00000239886.5"/>
</dbReference>
<dbReference type="Ensembl" id="ENST00000572513.1">
    <property type="protein sequence ID" value="ENSP00000458594.1"/>
    <property type="gene ID" value="ENSG00000263090.5"/>
</dbReference>
<dbReference type="GeneID" id="83899"/>
<dbReference type="KEGG" id="hsa:83899"/>
<dbReference type="MANE-Select" id="ENST00000377721.3">
    <property type="protein sequence ID" value="ENSP00000366950.3"/>
    <property type="RefSeq nucleotide sequence ID" value="NM_031961.3"/>
    <property type="RefSeq protein sequence ID" value="NP_114167.2"/>
</dbReference>
<dbReference type="UCSC" id="uc002hwf.3">
    <property type="organism name" value="human"/>
</dbReference>
<dbReference type="AGR" id="HGNC:16926"/>
<dbReference type="CTD" id="83899"/>
<dbReference type="DisGeNET" id="83899"/>
<dbReference type="GeneCards" id="KRTAP9-2"/>
<dbReference type="HGNC" id="HGNC:16926">
    <property type="gene designation" value="KRTAP9-2"/>
</dbReference>
<dbReference type="HPA" id="ENSG00000239886">
    <property type="expression patterns" value="Tissue enriched (skin)"/>
</dbReference>
<dbReference type="neXtProt" id="NX_Q9BYQ4"/>
<dbReference type="PharmGKB" id="PA38424"/>
<dbReference type="VEuPathDB" id="HostDB:ENSG00000239886"/>
<dbReference type="eggNOG" id="KOG4726">
    <property type="taxonomic scope" value="Eukaryota"/>
</dbReference>
<dbReference type="GeneTree" id="ENSGT00940000156135"/>
<dbReference type="HOGENOM" id="CLU_113141_0_0_1"/>
<dbReference type="InParanoid" id="Q9BYQ4"/>
<dbReference type="OMA" id="ACVTSCR"/>
<dbReference type="PAN-GO" id="Q9BYQ4">
    <property type="GO annotations" value="0 GO annotations based on evolutionary models"/>
</dbReference>
<dbReference type="PhylomeDB" id="Q9BYQ4"/>
<dbReference type="TreeFam" id="TF351356"/>
<dbReference type="PathwayCommons" id="Q9BYQ4"/>
<dbReference type="Reactome" id="R-HSA-6805567">
    <property type="pathway name" value="Keratinization"/>
</dbReference>
<dbReference type="SignaLink" id="Q9BYQ4"/>
<dbReference type="BioGRID-ORCS" id="83899">
    <property type="hits" value="127 hits in 1031 CRISPR screens"/>
</dbReference>
<dbReference type="GenomeRNAi" id="83899"/>
<dbReference type="Pharos" id="Q9BYQ4">
    <property type="development level" value="Tdark"/>
</dbReference>
<dbReference type="PRO" id="PR:Q9BYQ4"/>
<dbReference type="Proteomes" id="UP000005640">
    <property type="component" value="Chromosome 17"/>
</dbReference>
<dbReference type="RNAct" id="Q9BYQ4">
    <property type="molecule type" value="protein"/>
</dbReference>
<dbReference type="Bgee" id="ENSG00000239886">
    <property type="expression patterns" value="Expressed in skin of abdomen and 19 other cell types or tissues"/>
</dbReference>
<dbReference type="GO" id="GO:0005829">
    <property type="term" value="C:cytosol"/>
    <property type="evidence" value="ECO:0000304"/>
    <property type="project" value="Reactome"/>
</dbReference>
<dbReference type="GO" id="GO:0045095">
    <property type="term" value="C:keratin filament"/>
    <property type="evidence" value="ECO:0007669"/>
    <property type="project" value="InterPro"/>
</dbReference>
<dbReference type="GO" id="GO:0042802">
    <property type="term" value="F:identical protein binding"/>
    <property type="evidence" value="ECO:0000353"/>
    <property type="project" value="IntAct"/>
</dbReference>
<dbReference type="InterPro" id="IPR002494">
    <property type="entry name" value="KAP"/>
</dbReference>
<dbReference type="Pfam" id="PF13885">
    <property type="entry name" value="Keratin_B2_2"/>
    <property type="match status" value="2"/>
</dbReference>
<name>KRA92_HUMAN</name>
<protein>
    <recommendedName>
        <fullName>Keratin-associated protein 9-2</fullName>
    </recommendedName>
    <alternativeName>
        <fullName>Keratin-associated protein 9.2</fullName>
    </alternativeName>
    <alternativeName>
        <fullName>Ultrahigh sulfur keratin-associated protein 9.2</fullName>
    </alternativeName>
</protein>
<gene>
    <name type="primary">KRTAP9-2</name>
    <name type="synonym">KAP9.2</name>
    <name type="synonym">KRTAP9.2</name>
</gene>
<evidence type="ECO:0000269" key="1">
    <source>
    </source>
</evidence>
<evidence type="ECO:0000269" key="2">
    <source>
    </source>
</evidence>
<evidence type="ECO:0000305" key="3"/>
<sequence length="174" mass="18287">MTHCCSPCCQPTCCRTTCCRTTCWKPTTVTTCSSTPCCQPACCVSSCCQPCCRPTCCQNTCCRTTCCQPTCVTSCCQPSCCSTPCCQPTCCGSSCCGQTSCGSSCGQSSSCAPVYCRRTCYYPTTVCLPGCLNQSCGSNCCQPCCRPACCETTCCRTTCFQPTCVSSCCQPSCC</sequence>
<keyword id="KW-0416">Keratin</keyword>
<keyword id="KW-1267">Proteomics identification</keyword>
<keyword id="KW-1185">Reference proteome</keyword>
<keyword id="KW-0677">Repeat</keyword>